<name>KLD7A_PONAB</name>
<accession>Q5R866</accession>
<accession>Q5R7Y6</accession>
<accession>Q5RCK4</accession>
<gene>
    <name type="primary">KLHDC7A</name>
</gene>
<dbReference type="EMBL" id="CR858266">
    <property type="protein sequence ID" value="CAH90503.1"/>
    <property type="status" value="ALT_INIT"/>
    <property type="molecule type" value="mRNA"/>
</dbReference>
<dbReference type="EMBL" id="CR859888">
    <property type="protein sequence ID" value="CAH92044.1"/>
    <property type="status" value="ALT_INIT"/>
    <property type="molecule type" value="mRNA"/>
</dbReference>
<dbReference type="EMBL" id="CR859972">
    <property type="protein sequence ID" value="CAH92124.1"/>
    <property type="status" value="ALT_SEQ"/>
    <property type="molecule type" value="mRNA"/>
</dbReference>
<dbReference type="RefSeq" id="NP_001125264.1">
    <property type="nucleotide sequence ID" value="NM_001131792.1"/>
</dbReference>
<dbReference type="SMR" id="Q5R866"/>
<dbReference type="FunCoup" id="Q5R866">
    <property type="interactions" value="2"/>
</dbReference>
<dbReference type="STRING" id="9601.ENSPPYP00000002092"/>
<dbReference type="GlyCosmos" id="Q5R866">
    <property type="glycosylation" value="1 site, No reported glycans"/>
</dbReference>
<dbReference type="GeneID" id="100172161"/>
<dbReference type="KEGG" id="pon:100172161"/>
<dbReference type="CTD" id="127707"/>
<dbReference type="eggNOG" id="KOG1072">
    <property type="taxonomic scope" value="Eukaryota"/>
</dbReference>
<dbReference type="InParanoid" id="Q5R866"/>
<dbReference type="OrthoDB" id="45365at2759"/>
<dbReference type="Proteomes" id="UP000001595">
    <property type="component" value="Unplaced"/>
</dbReference>
<dbReference type="GO" id="GO:0016020">
    <property type="term" value="C:membrane"/>
    <property type="evidence" value="ECO:0007669"/>
    <property type="project" value="UniProtKB-SubCell"/>
</dbReference>
<dbReference type="CDD" id="cd18484">
    <property type="entry name" value="BACK_KBTBD11_CMLAP"/>
    <property type="match status" value="1"/>
</dbReference>
<dbReference type="Gene3D" id="2.120.10.80">
    <property type="entry name" value="Kelch-type beta propeller"/>
    <property type="match status" value="1"/>
</dbReference>
<dbReference type="InterPro" id="IPR015915">
    <property type="entry name" value="Kelch-typ_b-propeller"/>
</dbReference>
<dbReference type="InterPro" id="IPR052310">
    <property type="entry name" value="Kelch/BTB_domain_protein"/>
</dbReference>
<dbReference type="InterPro" id="IPR006652">
    <property type="entry name" value="Kelch_1"/>
</dbReference>
<dbReference type="PANTHER" id="PTHR45972">
    <property type="entry name" value="BTB_2 DOMAIN-CONTAINING PROTEIN"/>
    <property type="match status" value="1"/>
</dbReference>
<dbReference type="PANTHER" id="PTHR45972:SF1">
    <property type="entry name" value="KELCH DOMAIN-CONTAINING PROTEIN 7A"/>
    <property type="match status" value="1"/>
</dbReference>
<dbReference type="Pfam" id="PF01344">
    <property type="entry name" value="Kelch_1"/>
    <property type="match status" value="2"/>
</dbReference>
<dbReference type="SMART" id="SM00612">
    <property type="entry name" value="Kelch"/>
    <property type="match status" value="2"/>
</dbReference>
<dbReference type="SUPFAM" id="SSF117281">
    <property type="entry name" value="Kelch motif"/>
    <property type="match status" value="1"/>
</dbReference>
<protein>
    <recommendedName>
        <fullName>Kelch domain-containing protein 7A</fullName>
    </recommendedName>
</protein>
<keyword id="KW-0325">Glycoprotein</keyword>
<keyword id="KW-0880">Kelch repeat</keyword>
<keyword id="KW-0472">Membrane</keyword>
<keyword id="KW-0597">Phosphoprotein</keyword>
<keyword id="KW-1185">Reference proteome</keyword>
<keyword id="KW-0677">Repeat</keyword>
<keyword id="KW-0812">Transmembrane</keyword>
<keyword id="KW-1133">Transmembrane helix</keyword>
<comment type="subcellular location">
    <subcellularLocation>
        <location evidence="5">Membrane</location>
        <topology evidence="5">Single-pass membrane protein</topology>
    </subcellularLocation>
</comment>
<comment type="sequence caution" evidence="5">
    <conflict type="erroneous initiation">
        <sequence resource="EMBL-CDS" id="CAH90503"/>
    </conflict>
</comment>
<comment type="sequence caution" evidence="5">
    <conflict type="erroneous initiation">
        <sequence resource="EMBL-CDS" id="CAH92044"/>
    </conflict>
</comment>
<comment type="sequence caution" evidence="5">
    <conflict type="erroneous initiation">
        <sequence resource="EMBL-CDS" id="CAH92124"/>
    </conflict>
    <text>Truncated N-terminus.</text>
</comment>
<comment type="sequence caution" evidence="5">
    <conflict type="frameshift">
        <sequence resource="EMBL-CDS" id="CAH92124"/>
    </conflict>
</comment>
<reference key="1">
    <citation type="submission" date="2004-11" db="EMBL/GenBank/DDBJ databases">
        <authorList>
            <consortium name="The German cDNA consortium"/>
        </authorList>
    </citation>
    <scope>NUCLEOTIDE SEQUENCE [LARGE SCALE MRNA]</scope>
    <source>
        <tissue>Kidney</tissue>
    </source>
</reference>
<feature type="chain" id="PRO_0000285087" description="Kelch domain-containing protein 7A">
    <location>
        <begin position="1" status="less than"/>
        <end position="768"/>
    </location>
</feature>
<feature type="transmembrane region" description="Helical" evidence="3">
    <location>
        <begin position="12"/>
        <end position="29"/>
    </location>
</feature>
<feature type="repeat" description="Kelch 1">
    <location>
        <begin position="319"/>
        <end position="365"/>
    </location>
</feature>
<feature type="repeat" description="Kelch 2">
    <location>
        <begin position="483"/>
        <end position="529"/>
    </location>
</feature>
<feature type="repeat" description="Kelch 3">
    <location>
        <begin position="532"/>
        <end position="580"/>
    </location>
</feature>
<feature type="repeat" description="Kelch 4">
    <location>
        <begin position="581"/>
        <end position="623"/>
    </location>
</feature>
<feature type="repeat" description="Kelch 5">
    <location>
        <begin position="626"/>
        <end position="668"/>
    </location>
</feature>
<feature type="region of interest" description="Disordered" evidence="4">
    <location>
        <begin position="35"/>
        <end position="210"/>
    </location>
</feature>
<feature type="region of interest" description="Disordered" evidence="4">
    <location>
        <begin position="304"/>
        <end position="352"/>
    </location>
</feature>
<feature type="region of interest" description="Disordered" evidence="4">
    <location>
        <begin position="371"/>
        <end position="395"/>
    </location>
</feature>
<feature type="compositionally biased region" description="Basic and acidic residues" evidence="4">
    <location>
        <begin position="104"/>
        <end position="118"/>
    </location>
</feature>
<feature type="modified residue" description="Phosphoserine" evidence="1">
    <location>
        <position position="77"/>
    </location>
</feature>
<feature type="modified residue" description="Phosphoserine" evidence="2">
    <location>
        <position position="356"/>
    </location>
</feature>
<feature type="glycosylation site" description="N-linked (GlcNAc...) asparagine" evidence="3">
    <location>
        <position position="248"/>
    </location>
</feature>
<feature type="sequence conflict" description="In Ref. 1; CAH92044/CAH92124." evidence="5" ref="1">
    <original>S</original>
    <variation>G</variation>
    <location>
        <position position="121"/>
    </location>
</feature>
<feature type="sequence conflict" description="In Ref. 1; CAH92044/CAH92124." evidence="5" ref="1">
    <original>G</original>
    <variation>S</variation>
    <location>
        <position position="133"/>
    </location>
</feature>
<feature type="sequence conflict" description="In Ref. 1; CAH92044/CAH92124." evidence="5" ref="1">
    <original>S</original>
    <variation>G</variation>
    <location>
        <position position="141"/>
    </location>
</feature>
<feature type="sequence conflict" description="In Ref. 1; CAH90503." evidence="5" ref="1">
    <original>P</original>
    <variation>S</variation>
    <location>
        <position position="144"/>
    </location>
</feature>
<feature type="sequence conflict" description="In Ref. 1; CAH90503." evidence="5" ref="1">
    <original>G</original>
    <variation>S</variation>
    <location>
        <position position="173"/>
    </location>
</feature>
<feature type="sequence conflict" description="In Ref. 1; CAH92044/CAH92124." evidence="5" ref="1">
    <original>L</original>
    <variation>P</variation>
    <location>
        <position position="176"/>
    </location>
</feature>
<feature type="sequence conflict" description="In Ref. 1; CAH92044." evidence="5" ref="1">
    <original>N</original>
    <variation>S</variation>
    <location>
        <position position="567"/>
    </location>
</feature>
<feature type="sequence conflict" description="In Ref. 1; CAH92044." evidence="5" ref="1">
    <original>S</original>
    <variation>I</variation>
    <location>
        <position position="656"/>
    </location>
</feature>
<feature type="sequence conflict" description="In Ref. 1; CAH92044/CAH92124." evidence="5" ref="1">
    <original>P</original>
    <variation>L</variation>
    <location>
        <position position="761"/>
    </location>
</feature>
<feature type="non-terminal residue">
    <location>
        <position position="1"/>
    </location>
</feature>
<organism>
    <name type="scientific">Pongo abelii</name>
    <name type="common">Sumatran orangutan</name>
    <name type="synonym">Pongo pygmaeus abelii</name>
    <dbReference type="NCBI Taxonomy" id="9601"/>
    <lineage>
        <taxon>Eukaryota</taxon>
        <taxon>Metazoa</taxon>
        <taxon>Chordata</taxon>
        <taxon>Craniata</taxon>
        <taxon>Vertebrata</taxon>
        <taxon>Euteleostomi</taxon>
        <taxon>Mammalia</taxon>
        <taxon>Eutheria</taxon>
        <taxon>Euarchontoglires</taxon>
        <taxon>Primates</taxon>
        <taxon>Haplorrhini</taxon>
        <taxon>Catarrhini</taxon>
        <taxon>Hominidae</taxon>
        <taxon>Pongo</taxon>
    </lineage>
</organism>
<evidence type="ECO:0000250" key="1">
    <source>
        <dbReference type="UniProtKB" id="A2APT9"/>
    </source>
</evidence>
<evidence type="ECO:0000250" key="2">
    <source>
        <dbReference type="UniProtKB" id="Q5VTJ3"/>
    </source>
</evidence>
<evidence type="ECO:0000255" key="3"/>
<evidence type="ECO:0000256" key="4">
    <source>
        <dbReference type="SAM" id="MobiDB-lite"/>
    </source>
</evidence>
<evidence type="ECO:0000305" key="5"/>
<proteinExistence type="evidence at transcript level"/>
<sequence>DWHLDMQLTGKVVLSAAALLLVTVAYRLYKSRPAPAQRWGGNAQAEAKEEAQGSGQPAVQEASPGVLLTGPRRRRSSKGAEAPQGCSCENPRGPYVLVTGATSTDRKSQRKGSGEERGGQSSDSEQVPPCCRGQETRTAVSGNPDPPHLPRLGSEPNSSPAGLIAAADGSCAGGELSPPQDSKPPEHPGLGQLEPPHCHHPAPLQGSSDMNQSWVFTRVIGVNREEAGALEAASDVGLTLHQQEGAPNASYTFSSIARVRMEENFIQKVEGVEPRLKGKVYDYYVESTSQAIFQGRLAPRTAALTEVPSPRPPPRSLGTGAASGGQAGDTKGAAERAASPQPGPSPSTRGFSRKESLLQIAENPELQLQPDGFWLPAPPCPDPGALPGSGRSSQEPHVQLVAGTNFFHIPLTSASAPQVHLDLGNCYEVLTLAKRQNLEALKEAAYKVMSENYLQVLRSPDIYGCLSGAERELILQRRLQGRQYLVVADVSPKEDSGGLCCYDDELDVWRPLARLPPEAVSRGCAICSLFNYLFVVSGCQGPGHQPSSRVFCYNPLTGIWSEVCPLNQARPHCRLVALDGHLYAIGGECLNSVERYDPRLDRWDFAPPLPNDTFALAHTATACAKEIFVTGGSLRFLLFRFSAQEQRWWAGPAGGSKDRTAEMVAVNGFLYRFDLNRSLGIAVYRCSASTRLWYECATYRTPYPDAFQCAVVDNLIYCVGRRSTLCFLADSVSPRFVPKELRSFPAPQGTLLPTVLTLPTPDLPQTRV</sequence>